<evidence type="ECO:0000255" key="1">
    <source>
        <dbReference type="HAMAP-Rule" id="MF_01247"/>
    </source>
</evidence>
<reference key="1">
    <citation type="submission" date="2008-02" db="EMBL/GenBank/DDBJ databases">
        <title>Complete sequence of Yersinia pseudotuberculosis YPIII.</title>
        <authorList>
            <consortium name="US DOE Joint Genome Institute"/>
            <person name="Copeland A."/>
            <person name="Lucas S."/>
            <person name="Lapidus A."/>
            <person name="Glavina del Rio T."/>
            <person name="Dalin E."/>
            <person name="Tice H."/>
            <person name="Bruce D."/>
            <person name="Goodwin L."/>
            <person name="Pitluck S."/>
            <person name="Munk A.C."/>
            <person name="Brettin T."/>
            <person name="Detter J.C."/>
            <person name="Han C."/>
            <person name="Tapia R."/>
            <person name="Schmutz J."/>
            <person name="Larimer F."/>
            <person name="Land M."/>
            <person name="Hauser L."/>
            <person name="Challacombe J.F."/>
            <person name="Green L."/>
            <person name="Lindler L.E."/>
            <person name="Nikolich M.P."/>
            <person name="Richardson P."/>
        </authorList>
    </citation>
    <scope>NUCLEOTIDE SEQUENCE [LARGE SCALE GENOMIC DNA]</scope>
    <source>
        <strain>YPIII</strain>
    </source>
</reference>
<keyword id="KW-0010">Activator</keyword>
<keyword id="KW-0067">ATP-binding</keyword>
<keyword id="KW-0119">Carbohydrate metabolism</keyword>
<keyword id="KW-0238">DNA-binding</keyword>
<keyword id="KW-0547">Nucleotide-binding</keyword>
<keyword id="KW-0804">Transcription</keyword>
<keyword id="KW-0805">Transcription regulation</keyword>
<protein>
    <recommendedName>
        <fullName evidence="1">HTH-type transcriptional regulator MalT</fullName>
    </recommendedName>
    <alternativeName>
        <fullName evidence="1">ATP-dependent transcriptional activator MalT</fullName>
    </alternativeName>
</protein>
<comment type="function">
    <text evidence="1">Positively regulates the transcription of the maltose regulon whose gene products are responsible for uptake and catabolism of malto-oligosaccharides. Specifically binds to the promoter region of its target genes, recognizing a short DNA motif called the MalT box.</text>
</comment>
<comment type="activity regulation">
    <text evidence="1">Activated by ATP and maltotriose, which are both required for DNA binding.</text>
</comment>
<comment type="subunit">
    <text evidence="1">Monomer in solution. Oligomerizes to an active state in the presence of the positive effectors ATP and maltotriose.</text>
</comment>
<comment type="similarity">
    <text evidence="1">Belongs to the MalT family.</text>
</comment>
<proteinExistence type="inferred from homology"/>
<organism>
    <name type="scientific">Yersinia pseudotuberculosis serotype O:3 (strain YPIII)</name>
    <dbReference type="NCBI Taxonomy" id="502800"/>
    <lineage>
        <taxon>Bacteria</taxon>
        <taxon>Pseudomonadati</taxon>
        <taxon>Pseudomonadota</taxon>
        <taxon>Gammaproteobacteria</taxon>
        <taxon>Enterobacterales</taxon>
        <taxon>Yersiniaceae</taxon>
        <taxon>Yersinia</taxon>
    </lineage>
</organism>
<name>MALT_YERPY</name>
<sequence>MLIPSKLSRPVRLQNTVVRDRLLVKLSSAANYRLTLINCPAGYGKTTLIAQWAADQSNLGWYSLDESDNQSERFATYLIAAIQLATGGHCSKSEALSQKHQYANLSALFSQLFIELSNWDGPLYLVIDDYHLITNDAIHEAMRFFLRHQPENLTLIILSRTLPSLGIANLRVRDQLLELGMQQLAFNHHEAQQFFECRLSSPLEQGDSSRLCDEVEGWVTALQLIALSSRQPNSSAQKSAKRLAGLNASHLSDYLVDEVLDQVDSKARAFLLRCSVLRSMNDALIVRLTGEDNGQQLLEELERQGLFIHRMDDSAEWFCFHPLFATFLRQRCQWELALELPELHHAAAEGWMALGYPAEAIHHALAAGDVGMLRDILLQHAWSLFHHSELALLEQCLTALPYPLLVQNPELALLQAWLAQSQHRYSEVNTLLEQAELAMQERKIPVDEILRAEFGALRAQVAINAGKPDEAEKLATDALKYLPMAHYYSRIVATSVTGEVHHCKGELARALPMMQQTEQMARRHEAYHYALWALLQQSEILIAQGFLQAAYETQEKAFELIREQHLEQLPMHEFLLRIRSQVLWSWSRLDEAEEAARKGVEILANYQPQQQLQCLAMLAKCSLARGDLDNANVYIQRCEALQHGSQYHLDWITNADKPRVIHWQMTGDKVAAASWLRQTEKPGMADNHFLQGQWRNIARVQIILGRFDEAEVVLDELNENARRLRLTSDLNRNLLLSNTLYWQTERKGEAQKALIESLTLANRTGFISHFVIEGEAMAQQLRQLIQLNALPELEQHRAQRILKDINQHHRHKFAHFDEIFVDKLLTHPQVPELIRTSPLTQREWQVLGLIYSGYSNDQIANELDVAATTIKTHIRNLYQKLGVAHRQEAVQQAQRLLQMMGYV</sequence>
<gene>
    <name evidence="1" type="primary">malT</name>
    <name type="ordered locus">YPK_0160</name>
</gene>
<accession>B1JHZ0</accession>
<feature type="chain" id="PRO_1000139862" description="HTH-type transcriptional regulator MalT">
    <location>
        <begin position="1"/>
        <end position="903"/>
    </location>
</feature>
<feature type="domain" description="HTH luxR-type" evidence="1">
    <location>
        <begin position="832"/>
        <end position="897"/>
    </location>
</feature>
<feature type="DNA-binding region" description="H-T-H motif" evidence="1">
    <location>
        <begin position="856"/>
        <end position="875"/>
    </location>
</feature>
<feature type="binding site" evidence="1">
    <location>
        <begin position="39"/>
        <end position="46"/>
    </location>
    <ligand>
        <name>ATP</name>
        <dbReference type="ChEBI" id="CHEBI:30616"/>
    </ligand>
</feature>
<dbReference type="EMBL" id="CP000950">
    <property type="protein sequence ID" value="ACA66473.1"/>
    <property type="molecule type" value="Genomic_DNA"/>
</dbReference>
<dbReference type="RefSeq" id="WP_002208926.1">
    <property type="nucleotide sequence ID" value="NZ_CP009792.1"/>
</dbReference>
<dbReference type="SMR" id="B1JHZ0"/>
<dbReference type="GeneID" id="57974475"/>
<dbReference type="KEGG" id="ypy:YPK_0160"/>
<dbReference type="PATRIC" id="fig|502800.11.peg.767"/>
<dbReference type="GO" id="GO:0005524">
    <property type="term" value="F:ATP binding"/>
    <property type="evidence" value="ECO:0007669"/>
    <property type="project" value="UniProtKB-UniRule"/>
</dbReference>
<dbReference type="GO" id="GO:0003677">
    <property type="term" value="F:DNA binding"/>
    <property type="evidence" value="ECO:0007669"/>
    <property type="project" value="UniProtKB-KW"/>
</dbReference>
<dbReference type="GO" id="GO:0003700">
    <property type="term" value="F:DNA-binding transcription factor activity"/>
    <property type="evidence" value="ECO:0007669"/>
    <property type="project" value="UniProtKB-UniRule"/>
</dbReference>
<dbReference type="GO" id="GO:0045913">
    <property type="term" value="P:positive regulation of carbohydrate metabolic process"/>
    <property type="evidence" value="ECO:0007669"/>
    <property type="project" value="UniProtKB-UniRule"/>
</dbReference>
<dbReference type="GO" id="GO:0045893">
    <property type="term" value="P:positive regulation of DNA-templated transcription"/>
    <property type="evidence" value="ECO:0007669"/>
    <property type="project" value="UniProtKB-UniRule"/>
</dbReference>
<dbReference type="CDD" id="cd06170">
    <property type="entry name" value="LuxR_C_like"/>
    <property type="match status" value="1"/>
</dbReference>
<dbReference type="FunFam" id="1.10.10.10:FF:000115">
    <property type="entry name" value="HTH-type transcriptional regulator MalT"/>
    <property type="match status" value="1"/>
</dbReference>
<dbReference type="Gene3D" id="1.25.40.10">
    <property type="entry name" value="Tetratricopeptide repeat domain"/>
    <property type="match status" value="1"/>
</dbReference>
<dbReference type="Gene3D" id="1.10.10.10">
    <property type="entry name" value="Winged helix-like DNA-binding domain superfamily/Winged helix DNA-binding domain"/>
    <property type="match status" value="1"/>
</dbReference>
<dbReference type="HAMAP" id="MF_01247">
    <property type="entry name" value="HTH_type_MalT"/>
    <property type="match status" value="1"/>
</dbReference>
<dbReference type="InterPro" id="IPR027417">
    <property type="entry name" value="P-loop_NTPase"/>
</dbReference>
<dbReference type="InterPro" id="IPR016032">
    <property type="entry name" value="Sig_transdc_resp-reg_C-effctor"/>
</dbReference>
<dbReference type="InterPro" id="IPR011990">
    <property type="entry name" value="TPR-like_helical_dom_sf"/>
</dbReference>
<dbReference type="InterPro" id="IPR041617">
    <property type="entry name" value="TPR_MalT"/>
</dbReference>
<dbReference type="InterPro" id="IPR023768">
    <property type="entry name" value="Tscrpt_reg_HTH_MalT"/>
</dbReference>
<dbReference type="InterPro" id="IPR000792">
    <property type="entry name" value="Tscrpt_reg_LuxR_C"/>
</dbReference>
<dbReference type="InterPro" id="IPR036388">
    <property type="entry name" value="WH-like_DNA-bd_sf"/>
</dbReference>
<dbReference type="NCBIfam" id="NF003420">
    <property type="entry name" value="PRK04841.1"/>
    <property type="match status" value="1"/>
</dbReference>
<dbReference type="PANTHER" id="PTHR44688">
    <property type="entry name" value="DNA-BINDING TRANSCRIPTIONAL ACTIVATOR DEVR_DOSR"/>
    <property type="match status" value="1"/>
</dbReference>
<dbReference type="PANTHER" id="PTHR44688:SF16">
    <property type="entry name" value="DNA-BINDING TRANSCRIPTIONAL ACTIVATOR DEVR_DOSR"/>
    <property type="match status" value="1"/>
</dbReference>
<dbReference type="Pfam" id="PF00196">
    <property type="entry name" value="GerE"/>
    <property type="match status" value="1"/>
</dbReference>
<dbReference type="Pfam" id="PF17874">
    <property type="entry name" value="TPR_MalT"/>
    <property type="match status" value="1"/>
</dbReference>
<dbReference type="PRINTS" id="PR00038">
    <property type="entry name" value="HTHLUXR"/>
</dbReference>
<dbReference type="SMART" id="SM00421">
    <property type="entry name" value="HTH_LUXR"/>
    <property type="match status" value="1"/>
</dbReference>
<dbReference type="SUPFAM" id="SSF46894">
    <property type="entry name" value="C-terminal effector domain of the bipartite response regulators"/>
    <property type="match status" value="1"/>
</dbReference>
<dbReference type="SUPFAM" id="SSF52540">
    <property type="entry name" value="P-loop containing nucleoside triphosphate hydrolases"/>
    <property type="match status" value="1"/>
</dbReference>
<dbReference type="SUPFAM" id="SSF48452">
    <property type="entry name" value="TPR-like"/>
    <property type="match status" value="1"/>
</dbReference>
<dbReference type="PROSITE" id="PS00622">
    <property type="entry name" value="HTH_LUXR_1"/>
    <property type="match status" value="1"/>
</dbReference>
<dbReference type="PROSITE" id="PS50043">
    <property type="entry name" value="HTH_LUXR_2"/>
    <property type="match status" value="1"/>
</dbReference>